<reference key="1">
    <citation type="journal article" date="2005" name="J. Bacteriol.">
        <title>Whole-genome sequencing of Staphylococcus haemolyticus uncovers the extreme plasticity of its genome and the evolution of human-colonizing staphylococcal species.</title>
        <authorList>
            <person name="Takeuchi F."/>
            <person name="Watanabe S."/>
            <person name="Baba T."/>
            <person name="Yuzawa H."/>
            <person name="Ito T."/>
            <person name="Morimoto Y."/>
            <person name="Kuroda M."/>
            <person name="Cui L."/>
            <person name="Takahashi M."/>
            <person name="Ankai A."/>
            <person name="Baba S."/>
            <person name="Fukui S."/>
            <person name="Lee J.C."/>
            <person name="Hiramatsu K."/>
        </authorList>
    </citation>
    <scope>NUCLEOTIDE SEQUENCE [LARGE SCALE GENOMIC DNA]</scope>
    <source>
        <strain>JCSC1435</strain>
    </source>
</reference>
<sequence>MLPNGLIVSCQALPDEPLHSSFIMSKMALAAYQGGAVGIRANTKEDILAIREEVSLPVIGIVKRDYEGSNVFITATSKEVDELIESGCEVIALDATTQTRPKESLEELVHYIREKAPHVEIMADISTVEEAINADHLNFDYIGTTLRGYTSYTKGHILFENDFEFLKEVLEKVNAKVIAEGNVITPEMYKKVSDLGVHCTVVGGAITRPKQITERFIEAVQQK</sequence>
<accession>Q4L9T7</accession>
<feature type="chain" id="PRO_0000301487" description="Putative N-acetylmannosamine-6-phosphate 2-epimerase">
    <location>
        <begin position="1"/>
        <end position="223"/>
    </location>
</feature>
<name>NANE_STAHJ</name>
<comment type="function">
    <text evidence="1">Converts N-acetylmannosamine-6-phosphate (ManNAc-6-P) to N-acetylglucosamine-6-phosphate (GlcNAc-6-P).</text>
</comment>
<comment type="catalytic activity">
    <reaction evidence="1">
        <text>an N-acyl-D-glucosamine 6-phosphate = an N-acyl-D-mannosamine 6-phosphate</text>
        <dbReference type="Rhea" id="RHEA:23932"/>
        <dbReference type="ChEBI" id="CHEBI:57599"/>
        <dbReference type="ChEBI" id="CHEBI:57666"/>
        <dbReference type="EC" id="5.1.3.9"/>
    </reaction>
</comment>
<comment type="pathway">
    <text evidence="1">Amino-sugar metabolism; N-acetylneuraminate degradation; D-fructose 6-phosphate from N-acetylneuraminate: step 3/5.</text>
</comment>
<comment type="similarity">
    <text evidence="1">Belongs to the NanE family.</text>
</comment>
<evidence type="ECO:0000255" key="1">
    <source>
        <dbReference type="HAMAP-Rule" id="MF_01235"/>
    </source>
</evidence>
<organism>
    <name type="scientific">Staphylococcus haemolyticus (strain JCSC1435)</name>
    <dbReference type="NCBI Taxonomy" id="279808"/>
    <lineage>
        <taxon>Bacteria</taxon>
        <taxon>Bacillati</taxon>
        <taxon>Bacillota</taxon>
        <taxon>Bacilli</taxon>
        <taxon>Bacillales</taxon>
        <taxon>Staphylococcaceae</taxon>
        <taxon>Staphylococcus</taxon>
    </lineage>
</organism>
<protein>
    <recommendedName>
        <fullName evidence="1">Putative N-acetylmannosamine-6-phosphate 2-epimerase</fullName>
        <ecNumber evidence="1">5.1.3.9</ecNumber>
    </recommendedName>
    <alternativeName>
        <fullName evidence="1">ManNAc-6-P epimerase</fullName>
    </alternativeName>
</protein>
<proteinExistence type="inferred from homology"/>
<dbReference type="EC" id="5.1.3.9" evidence="1"/>
<dbReference type="EMBL" id="AP006716">
    <property type="protein sequence ID" value="BAE03588.1"/>
    <property type="molecule type" value="Genomic_DNA"/>
</dbReference>
<dbReference type="RefSeq" id="WP_011274608.1">
    <property type="nucleotide sequence ID" value="NC_007168.1"/>
</dbReference>
<dbReference type="SMR" id="Q4L9T7"/>
<dbReference type="KEGG" id="sha:SH0279"/>
<dbReference type="eggNOG" id="COG3010">
    <property type="taxonomic scope" value="Bacteria"/>
</dbReference>
<dbReference type="HOGENOM" id="CLU_086300_1_0_9"/>
<dbReference type="OrthoDB" id="9781704at2"/>
<dbReference type="UniPathway" id="UPA00629">
    <property type="reaction ID" value="UER00682"/>
</dbReference>
<dbReference type="Proteomes" id="UP000000543">
    <property type="component" value="Chromosome"/>
</dbReference>
<dbReference type="GO" id="GO:0005829">
    <property type="term" value="C:cytosol"/>
    <property type="evidence" value="ECO:0007669"/>
    <property type="project" value="TreeGrafter"/>
</dbReference>
<dbReference type="GO" id="GO:0047465">
    <property type="term" value="F:N-acylglucosamine-6-phosphate 2-epimerase activity"/>
    <property type="evidence" value="ECO:0007669"/>
    <property type="project" value="UniProtKB-EC"/>
</dbReference>
<dbReference type="GO" id="GO:0005975">
    <property type="term" value="P:carbohydrate metabolic process"/>
    <property type="evidence" value="ECO:0007669"/>
    <property type="project" value="UniProtKB-UniRule"/>
</dbReference>
<dbReference type="GO" id="GO:0006053">
    <property type="term" value="P:N-acetylmannosamine catabolic process"/>
    <property type="evidence" value="ECO:0007669"/>
    <property type="project" value="TreeGrafter"/>
</dbReference>
<dbReference type="GO" id="GO:0019262">
    <property type="term" value="P:N-acetylneuraminate catabolic process"/>
    <property type="evidence" value="ECO:0007669"/>
    <property type="project" value="UniProtKB-UniRule"/>
</dbReference>
<dbReference type="CDD" id="cd04729">
    <property type="entry name" value="NanE"/>
    <property type="match status" value="1"/>
</dbReference>
<dbReference type="FunFam" id="3.20.20.70:FF:000035">
    <property type="entry name" value="Putative N-acetylmannosamine-6-phosphate 2-epimerase"/>
    <property type="match status" value="1"/>
</dbReference>
<dbReference type="Gene3D" id="3.20.20.70">
    <property type="entry name" value="Aldolase class I"/>
    <property type="match status" value="1"/>
</dbReference>
<dbReference type="HAMAP" id="MF_01235">
    <property type="entry name" value="ManNAc6P_epimer"/>
    <property type="match status" value="1"/>
</dbReference>
<dbReference type="InterPro" id="IPR013785">
    <property type="entry name" value="Aldolase_TIM"/>
</dbReference>
<dbReference type="InterPro" id="IPR007260">
    <property type="entry name" value="NanE"/>
</dbReference>
<dbReference type="InterPro" id="IPR011060">
    <property type="entry name" value="RibuloseP-bd_barrel"/>
</dbReference>
<dbReference type="NCBIfam" id="NF002231">
    <property type="entry name" value="PRK01130.1"/>
    <property type="match status" value="1"/>
</dbReference>
<dbReference type="PANTHER" id="PTHR36204">
    <property type="entry name" value="N-ACETYLMANNOSAMINE-6-PHOSPHATE 2-EPIMERASE-RELATED"/>
    <property type="match status" value="1"/>
</dbReference>
<dbReference type="PANTHER" id="PTHR36204:SF1">
    <property type="entry name" value="N-ACETYLMANNOSAMINE-6-PHOSPHATE 2-EPIMERASE-RELATED"/>
    <property type="match status" value="1"/>
</dbReference>
<dbReference type="Pfam" id="PF04131">
    <property type="entry name" value="NanE"/>
    <property type="match status" value="1"/>
</dbReference>
<dbReference type="SUPFAM" id="SSF51366">
    <property type="entry name" value="Ribulose-phoshate binding barrel"/>
    <property type="match status" value="1"/>
</dbReference>
<gene>
    <name evidence="1" type="primary">nanE</name>
    <name type="ordered locus">SH0279</name>
</gene>
<keyword id="KW-0119">Carbohydrate metabolism</keyword>
<keyword id="KW-0413">Isomerase</keyword>